<feature type="chain" id="PRO_0000168905" description="Uncharacterized protein YdaG">
    <location>
        <begin position="1"/>
        <end position="44"/>
    </location>
</feature>
<sequence>MVHYEVVQYLMDCCGITYNQAVQALRSNDWDLWQAEVAIRSNKM</sequence>
<protein>
    <recommendedName>
        <fullName>Uncharacterized protein YdaG</fullName>
    </recommendedName>
</protein>
<dbReference type="EMBL" id="U00096">
    <property type="protein sequence ID" value="AAC74437.2"/>
    <property type="molecule type" value="Genomic_DNA"/>
</dbReference>
<dbReference type="EMBL" id="AP009048">
    <property type="protein sequence ID" value="BAE76410.1"/>
    <property type="molecule type" value="Genomic_DNA"/>
</dbReference>
<dbReference type="PIR" id="F64885">
    <property type="entry name" value="F64885"/>
</dbReference>
<dbReference type="RefSeq" id="NP_415873.2">
    <property type="nucleotide sequence ID" value="NC_000913.3"/>
</dbReference>
<dbReference type="RefSeq" id="WP_000233809.1">
    <property type="nucleotide sequence ID" value="NZ_JACEFS010000049.1"/>
</dbReference>
<dbReference type="SMR" id="P76061"/>
<dbReference type="BioGRID" id="4260158">
    <property type="interactions" value="10"/>
</dbReference>
<dbReference type="BioGRID" id="850272">
    <property type="interactions" value="4"/>
</dbReference>
<dbReference type="FunCoup" id="P76061">
    <property type="interactions" value="5"/>
</dbReference>
<dbReference type="IntAct" id="P76061">
    <property type="interactions" value="4"/>
</dbReference>
<dbReference type="STRING" id="511145.b1355"/>
<dbReference type="PaxDb" id="511145-b1355"/>
<dbReference type="EnsemblBacteria" id="AAC74437">
    <property type="protein sequence ID" value="AAC74437"/>
    <property type="gene ID" value="b1355"/>
</dbReference>
<dbReference type="GeneID" id="945907"/>
<dbReference type="KEGG" id="ecj:JW5210"/>
<dbReference type="KEGG" id="eco:b1355"/>
<dbReference type="PATRIC" id="fig|511145.12.peg.1415"/>
<dbReference type="EchoBASE" id="EB2092"/>
<dbReference type="eggNOG" id="ENOG5031NQI">
    <property type="taxonomic scope" value="Bacteria"/>
</dbReference>
<dbReference type="HOGENOM" id="CLU_210233_0_0_6"/>
<dbReference type="InParanoid" id="P76061"/>
<dbReference type="BioCyc" id="EcoCyc:G6679-MONOMER"/>
<dbReference type="PRO" id="PR:P76061"/>
<dbReference type="Proteomes" id="UP000000625">
    <property type="component" value="Chromosome"/>
</dbReference>
<dbReference type="InterPro" id="IPR009060">
    <property type="entry name" value="UBA-like_sf"/>
</dbReference>
<dbReference type="Pfam" id="PF14555">
    <property type="entry name" value="UBA_4"/>
    <property type="match status" value="1"/>
</dbReference>
<dbReference type="SUPFAM" id="SSF46934">
    <property type="entry name" value="UBA-like"/>
    <property type="match status" value="1"/>
</dbReference>
<organism>
    <name type="scientific">Escherichia coli (strain K12)</name>
    <dbReference type="NCBI Taxonomy" id="83333"/>
    <lineage>
        <taxon>Bacteria</taxon>
        <taxon>Pseudomonadati</taxon>
        <taxon>Pseudomonadota</taxon>
        <taxon>Gammaproteobacteria</taxon>
        <taxon>Enterobacterales</taxon>
        <taxon>Enterobacteriaceae</taxon>
        <taxon>Escherichia</taxon>
    </lineage>
</organism>
<comment type="induction">
    <text evidence="1">Constitutively expressed (at protein level).</text>
</comment>
<keyword id="KW-1185">Reference proteome</keyword>
<accession>P76061</accession>
<accession>Q2MBE6</accession>
<proteinExistence type="evidence at protein level"/>
<gene>
    <name type="primary">ydaG</name>
    <name type="ordered locus">b1355</name>
    <name type="ordered locus">JW5210</name>
</gene>
<reference key="1">
    <citation type="journal article" date="1997" name="Science">
        <title>The complete genome sequence of Escherichia coli K-12.</title>
        <authorList>
            <person name="Blattner F.R."/>
            <person name="Plunkett G. III"/>
            <person name="Bloch C.A."/>
            <person name="Perna N.T."/>
            <person name="Burland V."/>
            <person name="Riley M."/>
            <person name="Collado-Vides J."/>
            <person name="Glasner J.D."/>
            <person name="Rode C.K."/>
            <person name="Mayhew G.F."/>
            <person name="Gregor J."/>
            <person name="Davis N.W."/>
            <person name="Kirkpatrick H.A."/>
            <person name="Goeden M.A."/>
            <person name="Rose D.J."/>
            <person name="Mau B."/>
            <person name="Shao Y."/>
        </authorList>
    </citation>
    <scope>NUCLEOTIDE SEQUENCE [LARGE SCALE GENOMIC DNA]</scope>
    <source>
        <strain>K12 / MG1655 / ATCC 47076</strain>
    </source>
</reference>
<reference key="2">
    <citation type="journal article" date="2006" name="Mol. Syst. Biol.">
        <title>Highly accurate genome sequences of Escherichia coli K-12 strains MG1655 and W3110.</title>
        <authorList>
            <person name="Hayashi K."/>
            <person name="Morooka N."/>
            <person name="Yamamoto Y."/>
            <person name="Fujita K."/>
            <person name="Isono K."/>
            <person name="Choi S."/>
            <person name="Ohtsubo E."/>
            <person name="Baba T."/>
            <person name="Wanner B.L."/>
            <person name="Mori H."/>
            <person name="Horiuchi T."/>
        </authorList>
    </citation>
    <scope>NUCLEOTIDE SEQUENCE [LARGE SCALE GENOMIC DNA]</scope>
    <source>
        <strain>K12 / W3110 / ATCC 27325 / DSM 5911</strain>
    </source>
</reference>
<reference key="3">
    <citation type="journal article" date="2008" name="Mol. Microbiol.">
        <title>Small membrane proteins found by comparative genomics and ribosome binding site models.</title>
        <authorList>
            <person name="Hemm M.R."/>
            <person name="Paul B.J."/>
            <person name="Schneider T.D."/>
            <person name="Storz G."/>
            <person name="Rudd K.E."/>
        </authorList>
    </citation>
    <scope>INDUCTION</scope>
    <source>
        <strain>K12 / MG1655 / ATCC 47076</strain>
    </source>
</reference>
<evidence type="ECO:0000269" key="1">
    <source>
    </source>
</evidence>
<name>YDAG_ECOLI</name>